<feature type="chain" id="PRO_0000426045" description="Zinc-finger homeodomain protein 7">
    <location>
        <begin position="1"/>
        <end position="427"/>
    </location>
</feature>
<feature type="zinc finger region" description="ZF-HD dimerization-type; degenerate" evidence="2">
    <location>
        <begin position="163"/>
        <end position="211"/>
    </location>
</feature>
<feature type="DNA-binding region" description="Homeobox">
    <location>
        <begin position="318"/>
        <end position="381"/>
    </location>
</feature>
<feature type="region of interest" description="Disordered" evidence="3">
    <location>
        <begin position="1"/>
        <end position="60"/>
    </location>
</feature>
<feature type="region of interest" description="Disordered" evidence="3">
    <location>
        <begin position="91"/>
        <end position="118"/>
    </location>
</feature>
<feature type="region of interest" description="Disordered" evidence="3">
    <location>
        <begin position="264"/>
        <end position="320"/>
    </location>
</feature>
<feature type="region of interest" description="Disordered" evidence="3">
    <location>
        <begin position="375"/>
        <end position="427"/>
    </location>
</feature>
<feature type="compositionally biased region" description="Acidic residues" evidence="3">
    <location>
        <begin position="10"/>
        <end position="28"/>
    </location>
</feature>
<feature type="compositionally biased region" description="Low complexity" evidence="3">
    <location>
        <begin position="50"/>
        <end position="60"/>
    </location>
</feature>
<feature type="compositionally biased region" description="Low complexity" evidence="3">
    <location>
        <begin position="271"/>
        <end position="283"/>
    </location>
</feature>
<feature type="compositionally biased region" description="Low complexity" evidence="3">
    <location>
        <begin position="301"/>
        <end position="312"/>
    </location>
</feature>
<feature type="compositionally biased region" description="Pro residues" evidence="3">
    <location>
        <begin position="380"/>
        <end position="401"/>
    </location>
</feature>
<feature type="compositionally biased region" description="Basic residues" evidence="3">
    <location>
        <begin position="402"/>
        <end position="416"/>
    </location>
</feature>
<feature type="compositionally biased region" description="Low complexity" evidence="3">
    <location>
        <begin position="417"/>
        <end position="427"/>
    </location>
</feature>
<feature type="site" description="Required for DNA-binding" evidence="1">
    <location>
        <position position="370"/>
    </location>
</feature>
<organism>
    <name type="scientific">Oryza sativa subsp. japonica</name>
    <name type="common">Rice</name>
    <dbReference type="NCBI Taxonomy" id="39947"/>
    <lineage>
        <taxon>Eukaryota</taxon>
        <taxon>Viridiplantae</taxon>
        <taxon>Streptophyta</taxon>
        <taxon>Embryophyta</taxon>
        <taxon>Tracheophyta</taxon>
        <taxon>Spermatophyta</taxon>
        <taxon>Magnoliopsida</taxon>
        <taxon>Liliopsida</taxon>
        <taxon>Poales</taxon>
        <taxon>Poaceae</taxon>
        <taxon>BOP clade</taxon>
        <taxon>Oryzoideae</taxon>
        <taxon>Oryzeae</taxon>
        <taxon>Oryzinae</taxon>
        <taxon>Oryza</taxon>
        <taxon>Oryza sativa</taxon>
    </lineage>
</organism>
<dbReference type="EMBL" id="AF480496">
    <property type="protein sequence ID" value="AAL87169.1"/>
    <property type="molecule type" value="Genomic_DNA"/>
</dbReference>
<dbReference type="EMBL" id="AP005323">
    <property type="protein sequence ID" value="BAD08049.1"/>
    <property type="molecule type" value="Genomic_DNA"/>
</dbReference>
<dbReference type="EMBL" id="AP005844">
    <property type="protein sequence ID" value="BAD08093.1"/>
    <property type="molecule type" value="Genomic_DNA"/>
</dbReference>
<dbReference type="EMBL" id="AP014958">
    <property type="protein sequence ID" value="BAS80524.1"/>
    <property type="molecule type" value="Genomic_DNA"/>
</dbReference>
<dbReference type="RefSeq" id="XP_015626824.1">
    <property type="nucleotide sequence ID" value="XM_015771338.1"/>
</dbReference>
<dbReference type="SMR" id="Q8S3Q9"/>
<dbReference type="FunCoup" id="Q8S3Q9">
    <property type="interactions" value="16"/>
</dbReference>
<dbReference type="STRING" id="39947.Q8S3Q9"/>
<dbReference type="PaxDb" id="39947-Q8S3Q9"/>
<dbReference type="EnsemblPlants" id="Os02t0706600-00">
    <property type="protein sequence ID" value="Os02t0706600-00"/>
    <property type="gene ID" value="Os02g0706600"/>
</dbReference>
<dbReference type="Gramene" id="Os02t0706600-00">
    <property type="protein sequence ID" value="Os02t0706600-00"/>
    <property type="gene ID" value="Os02g0706600"/>
</dbReference>
<dbReference type="eggNOG" id="ENOG502QS6S">
    <property type="taxonomic scope" value="Eukaryota"/>
</dbReference>
<dbReference type="HOGENOM" id="CLU_643092_0_0_1"/>
<dbReference type="InParanoid" id="Q8S3Q9"/>
<dbReference type="OMA" id="HMQKRPP"/>
<dbReference type="OrthoDB" id="693330at2759"/>
<dbReference type="Proteomes" id="UP000000763">
    <property type="component" value="Chromosome 2"/>
</dbReference>
<dbReference type="Proteomes" id="UP000059680">
    <property type="component" value="Chromosome 2"/>
</dbReference>
<dbReference type="GO" id="GO:0005634">
    <property type="term" value="C:nucleus"/>
    <property type="evidence" value="ECO:0000318"/>
    <property type="project" value="GO_Central"/>
</dbReference>
<dbReference type="GO" id="GO:0003700">
    <property type="term" value="F:DNA-binding transcription factor activity"/>
    <property type="evidence" value="ECO:0000318"/>
    <property type="project" value="GO_Central"/>
</dbReference>
<dbReference type="GO" id="GO:0000976">
    <property type="term" value="F:transcription cis-regulatory region binding"/>
    <property type="evidence" value="ECO:0000318"/>
    <property type="project" value="GO_Central"/>
</dbReference>
<dbReference type="GO" id="GO:0008270">
    <property type="term" value="F:zinc ion binding"/>
    <property type="evidence" value="ECO:0007669"/>
    <property type="project" value="UniProtKB-KW"/>
</dbReference>
<dbReference type="GO" id="GO:0006355">
    <property type="term" value="P:regulation of DNA-templated transcription"/>
    <property type="evidence" value="ECO:0000318"/>
    <property type="project" value="GO_Central"/>
</dbReference>
<dbReference type="FunFam" id="1.10.10.60:FF:000257">
    <property type="entry name" value="Zinc-finger homeodomain protein 2"/>
    <property type="match status" value="1"/>
</dbReference>
<dbReference type="Gene3D" id="1.10.10.60">
    <property type="entry name" value="Homeodomain-like"/>
    <property type="match status" value="1"/>
</dbReference>
<dbReference type="InterPro" id="IPR009057">
    <property type="entry name" value="Homeodomain-like_sf"/>
</dbReference>
<dbReference type="InterPro" id="IPR006455">
    <property type="entry name" value="Homeodomain_ZF_HD"/>
</dbReference>
<dbReference type="InterPro" id="IPR006456">
    <property type="entry name" value="ZF_HD_homeobox_Cys/His_dimer"/>
</dbReference>
<dbReference type="NCBIfam" id="TIGR01565">
    <property type="entry name" value="homeo_ZF_HD"/>
    <property type="match status" value="1"/>
</dbReference>
<dbReference type="NCBIfam" id="TIGR01566">
    <property type="entry name" value="ZF_HD_prot_N"/>
    <property type="match status" value="1"/>
</dbReference>
<dbReference type="PANTHER" id="PTHR31948">
    <property type="entry name" value="ZINC-FINGER HOMEODOMAIN PROTEIN 2"/>
    <property type="match status" value="1"/>
</dbReference>
<dbReference type="PANTHER" id="PTHR31948:SF138">
    <property type="entry name" value="ZINC-FINGER HOMEODOMAIN PROTEIN 7"/>
    <property type="match status" value="1"/>
</dbReference>
<dbReference type="Pfam" id="PF04770">
    <property type="entry name" value="ZF-HD_dimer"/>
    <property type="match status" value="1"/>
</dbReference>
<dbReference type="SUPFAM" id="SSF46689">
    <property type="entry name" value="Homeodomain-like"/>
    <property type="match status" value="1"/>
</dbReference>
<dbReference type="PROSITE" id="PS51523">
    <property type="entry name" value="ZF_HD_DIMER"/>
    <property type="match status" value="1"/>
</dbReference>
<keyword id="KW-0238">DNA-binding</keyword>
<keyword id="KW-0371">Homeobox</keyword>
<keyword id="KW-0479">Metal-binding</keyword>
<keyword id="KW-0539">Nucleus</keyword>
<keyword id="KW-1185">Reference proteome</keyword>
<keyword id="KW-0804">Transcription</keyword>
<keyword id="KW-0805">Transcription regulation</keyword>
<keyword id="KW-0862">Zinc</keyword>
<keyword id="KW-0863">Zinc-finger</keyword>
<evidence type="ECO:0000250" key="1"/>
<evidence type="ECO:0000255" key="2">
    <source>
        <dbReference type="PROSITE-ProRule" id="PRU00856"/>
    </source>
</evidence>
<evidence type="ECO:0000256" key="3">
    <source>
        <dbReference type="SAM" id="MobiDB-lite"/>
    </source>
</evidence>
<accession>Q8S3Q9</accession>
<accession>A0A0P0VNS5</accession>
<reference key="1">
    <citation type="journal article" date="2004" name="Mol. Cells">
        <title>Further evidence of microcolinearity between barley and rice genomes at two orthologous regions.</title>
        <authorList>
            <person name="Park Y.-J."/>
            <person name="Dixit A."/>
            <person name="Yoo J.-W."/>
            <person name="Bennetzen J."/>
        </authorList>
    </citation>
    <scope>NUCLEOTIDE SEQUENCE [GENOMIC DNA]</scope>
    <source>
        <strain>cv. Nipponbare</strain>
    </source>
</reference>
<reference key="2">
    <citation type="journal article" date="2005" name="Nature">
        <title>The map-based sequence of the rice genome.</title>
        <authorList>
            <consortium name="International rice genome sequencing project (IRGSP)"/>
        </authorList>
    </citation>
    <scope>NUCLEOTIDE SEQUENCE [LARGE SCALE GENOMIC DNA]</scope>
    <source>
        <strain>cv. Nipponbare</strain>
    </source>
</reference>
<reference key="3">
    <citation type="journal article" date="2013" name="Rice">
        <title>Improvement of the Oryza sativa Nipponbare reference genome using next generation sequence and optical map data.</title>
        <authorList>
            <person name="Kawahara Y."/>
            <person name="de la Bastide M."/>
            <person name="Hamilton J.P."/>
            <person name="Kanamori H."/>
            <person name="McCombie W.R."/>
            <person name="Ouyang S."/>
            <person name="Schwartz D.C."/>
            <person name="Tanaka T."/>
            <person name="Wu J."/>
            <person name="Zhou S."/>
            <person name="Childs K.L."/>
            <person name="Davidson R.M."/>
            <person name="Lin H."/>
            <person name="Quesada-Ocampo L."/>
            <person name="Vaillancourt B."/>
            <person name="Sakai H."/>
            <person name="Lee S.S."/>
            <person name="Kim J."/>
            <person name="Numa H."/>
            <person name="Itoh T."/>
            <person name="Buell C.R."/>
            <person name="Matsumoto T."/>
        </authorList>
    </citation>
    <scope>GENOME REANNOTATION</scope>
    <source>
        <strain>cv. Nipponbare</strain>
    </source>
</reference>
<reference key="4">
    <citation type="journal article" date="2008" name="Nucleic Acids Res.">
        <title>The rice annotation project database (RAP-DB): 2008 update.</title>
        <authorList>
            <consortium name="The rice annotation project (RAP)"/>
        </authorList>
    </citation>
    <scope>GENOME REANNOTATION</scope>
    <source>
        <strain>cv. Nipponbare</strain>
    </source>
</reference>
<reference key="5">
    <citation type="journal article" date="2008" name="J. Integr. Plant Biol.">
        <title>Phylogenetic analysis of the plant-specific zinc finger-homeobox and mini zinc finger gene families.</title>
        <authorList>
            <person name="Hu W."/>
            <person name="dePamphilis C.W."/>
            <person name="Ma H."/>
        </authorList>
    </citation>
    <scope>GENE FAMILY</scope>
    <scope>NOMENCLATURE</scope>
</reference>
<gene>
    <name type="primary">ZHD7</name>
    <name type="ordered locus">Os02g0706600</name>
    <name type="ordered locus">LOC_Os02g47770</name>
    <name type="ORF">49D11.22</name>
    <name type="ORF">OSJNBb0060O16.6</name>
    <name type="ORF">P0680A05.32</name>
</gene>
<name>ZHD7_ORYSJ</name>
<proteinExistence type="inferred from homology"/>
<comment type="function">
    <text evidence="1">Putative transcription factor.</text>
</comment>
<comment type="subunit">
    <text evidence="1">Homo- and heterodimer with other ZFHD proteins.</text>
</comment>
<comment type="subcellular location">
    <subcellularLocation>
        <location evidence="1">Nucleus</location>
    </subcellularLocation>
</comment>
<comment type="domain">
    <text>The homeodomain differs form the typical one by having namely 4 instead of 3 extra amino acids inserted in the loop between helix 1 and helix 2.</text>
</comment>
<protein>
    <recommendedName>
        <fullName>Zinc-finger homeodomain protein 7</fullName>
        <shortName>OsZHD7</shortName>
    </recommendedName>
</protein>
<sequence>MEYKRSSHVEEEEEEEEEEDDEEEDEEEQGHHQYTTAAAQQQLHPQVLGSSASSPSSLMDSAAFSRPLLPPNLSLVSPSAAAAAAPGGSYLHAAHHHGQGRRVEAPGGESQHHLQRHHEPARNGVLGGVAGAHAASTLALVGGGGGGPRGGEGAAGEAPTWRYRECLKNHAARMGAHVLDGCGEFMSSPGDGAAALACAACGCHRSFHRREPAVVAPASLSLCPASASASAAAGLVSLSPSATPTGANSSRLMPLLLAPPHMQKRPPVLPVSPASAPAALAESSSEELRPPPLPSSHPHAHAAAVVAASASAPPGPSKKRFRTKFTAEQKERMREFAHRVGWRIHKPDAAAVDAFCAQVGVSRRVLKVWMHNNKHLAKTPPSPTSQPPPPPLHHDPSPPPPPHHHHHHHHHHHPPQHHQQQQQQHDA</sequence>